<dbReference type="EC" id="2.1.1.72" evidence="1"/>
<dbReference type="EMBL" id="AE015928">
    <property type="protein sequence ID" value="AAO79623.1"/>
    <property type="molecule type" value="Genomic_DNA"/>
</dbReference>
<dbReference type="RefSeq" id="NP_813429.1">
    <property type="nucleotide sequence ID" value="NC_004663.1"/>
</dbReference>
<dbReference type="RefSeq" id="WP_011109305.1">
    <property type="nucleotide sequence ID" value="NC_004663.1"/>
</dbReference>
<dbReference type="PDB" id="2OKC">
    <property type="method" value="X-ray"/>
    <property type="resolution" value="2.20 A"/>
    <property type="chains" value="A/B=1-444"/>
</dbReference>
<dbReference type="PDBsum" id="2OKC"/>
<dbReference type="SMR" id="Q89Z59"/>
<dbReference type="FunCoup" id="Q89Z59">
    <property type="interactions" value="241"/>
</dbReference>
<dbReference type="STRING" id="226186.BT_4518"/>
<dbReference type="REBASE" id="191896">
    <property type="entry name" value="M.Apa1447ORF2439P"/>
</dbReference>
<dbReference type="REBASE" id="246644">
    <property type="entry name" value="M.Mmy2708ORF27P"/>
</dbReference>
<dbReference type="REBASE" id="403240">
    <property type="entry name" value="Ssp8227ORF2875P"/>
</dbReference>
<dbReference type="REBASE" id="7071">
    <property type="entry name" value="M.BthVORF4518P"/>
</dbReference>
<dbReference type="PaxDb" id="226186-BT_4518"/>
<dbReference type="DNASU" id="1073274"/>
<dbReference type="EnsemblBacteria" id="AAO79623">
    <property type="protein sequence ID" value="AAO79623"/>
    <property type="gene ID" value="BT_4518"/>
</dbReference>
<dbReference type="GeneID" id="60925694"/>
<dbReference type="KEGG" id="bth:BT_4518"/>
<dbReference type="PATRIC" id="fig|226186.12.peg.4602"/>
<dbReference type="eggNOG" id="COG0286">
    <property type="taxonomic scope" value="Bacteria"/>
</dbReference>
<dbReference type="HOGENOM" id="CLU_018284_2_0_10"/>
<dbReference type="InParanoid" id="Q89Z59"/>
<dbReference type="OrthoDB" id="9814572at2"/>
<dbReference type="EvolutionaryTrace" id="Q89Z59"/>
<dbReference type="PRO" id="PR:Q89Z59"/>
<dbReference type="Proteomes" id="UP000001414">
    <property type="component" value="Chromosome"/>
</dbReference>
<dbReference type="GO" id="GO:0003677">
    <property type="term" value="F:DNA binding"/>
    <property type="evidence" value="ECO:0007669"/>
    <property type="project" value="UniProtKB-KW"/>
</dbReference>
<dbReference type="GO" id="GO:0008170">
    <property type="term" value="F:N-methyltransferase activity"/>
    <property type="evidence" value="ECO:0007669"/>
    <property type="project" value="InterPro"/>
</dbReference>
<dbReference type="GO" id="GO:0009007">
    <property type="term" value="F:site-specific DNA-methyltransferase (adenine-specific) activity"/>
    <property type="evidence" value="ECO:0007669"/>
    <property type="project" value="UniProtKB-EC"/>
</dbReference>
<dbReference type="GO" id="GO:0009307">
    <property type="term" value="P:DNA restriction-modification system"/>
    <property type="evidence" value="ECO:0007669"/>
    <property type="project" value="UniProtKB-KW"/>
</dbReference>
<dbReference type="GO" id="GO:0032259">
    <property type="term" value="P:methylation"/>
    <property type="evidence" value="ECO:0007669"/>
    <property type="project" value="UniProtKB-KW"/>
</dbReference>
<dbReference type="Gene3D" id="1.20.1260.30">
    <property type="match status" value="1"/>
</dbReference>
<dbReference type="Gene3D" id="3.40.50.150">
    <property type="entry name" value="Vaccinia Virus protein VP39"/>
    <property type="match status" value="1"/>
</dbReference>
<dbReference type="InterPro" id="IPR022749">
    <property type="entry name" value="D12N6_MeTrfase_N"/>
</dbReference>
<dbReference type="InterPro" id="IPR051537">
    <property type="entry name" value="DNA_Adenine_Mtase"/>
</dbReference>
<dbReference type="InterPro" id="IPR003356">
    <property type="entry name" value="DNA_methylase_A-5"/>
</dbReference>
<dbReference type="InterPro" id="IPR002052">
    <property type="entry name" value="DNA_methylase_N6_adenine_CS"/>
</dbReference>
<dbReference type="InterPro" id="IPR029063">
    <property type="entry name" value="SAM-dependent_MTases_sf"/>
</dbReference>
<dbReference type="InterPro" id="IPR038333">
    <property type="entry name" value="T1MK-like_N_sf"/>
</dbReference>
<dbReference type="PANTHER" id="PTHR42933">
    <property type="entry name" value="SLR6095 PROTEIN"/>
    <property type="match status" value="1"/>
</dbReference>
<dbReference type="PANTHER" id="PTHR42933:SF4">
    <property type="entry name" value="TYPE I RESTRICTION ENZYME ECOKI METHYLASE SUBUNIT"/>
    <property type="match status" value="1"/>
</dbReference>
<dbReference type="Pfam" id="PF12161">
    <property type="entry name" value="HsdM_N"/>
    <property type="match status" value="1"/>
</dbReference>
<dbReference type="Pfam" id="PF02384">
    <property type="entry name" value="N6_Mtase"/>
    <property type="match status" value="1"/>
</dbReference>
<dbReference type="PRINTS" id="PR00507">
    <property type="entry name" value="N12N6MTFRASE"/>
</dbReference>
<dbReference type="SUPFAM" id="SSF53335">
    <property type="entry name" value="S-adenosyl-L-methionine-dependent methyltransferases"/>
    <property type="match status" value="1"/>
</dbReference>
<dbReference type="PROSITE" id="PS00092">
    <property type="entry name" value="N6_MTASE"/>
    <property type="match status" value="1"/>
</dbReference>
<keyword id="KW-0002">3D-structure</keyword>
<keyword id="KW-0238">DNA-binding</keyword>
<keyword id="KW-0489">Methyltransferase</keyword>
<keyword id="KW-1185">Reference proteome</keyword>
<keyword id="KW-0680">Restriction system</keyword>
<keyword id="KW-0949">S-adenosyl-L-methionine</keyword>
<keyword id="KW-0808">Transferase</keyword>
<comment type="function">
    <text evidence="1 3">The subtype gamma methyltransferase (M) subunit of a type I restriction enzyme. The M and S subunits together form a methyltransferase (MTase) that methylates two adenine residues of an undetermined sequence. In the presence of the R subunit the complex can also act as an endonuclease, binding to the same target sequence but cutting the DNA some distance from this site. Whether the DNA is cut or modified depends on the methylation state of the target sequence. When the target site is unmodified, the DNA is cut. When the target site is hemimethylated, the complex acts as a maintenance MTase modifying the DNA so that both strands become methylated. After locating a non-methylated recognition site, the enzyme complex serves as a molecular motor that translocates DNA in an ATP-dependent manner until a collision occurs that triggers cleavage.</text>
</comment>
<comment type="catalytic activity">
    <reaction evidence="1">
        <text>a 2'-deoxyadenosine in DNA + S-adenosyl-L-methionine = an N(6)-methyl-2'-deoxyadenosine in DNA + S-adenosyl-L-homocysteine + H(+)</text>
        <dbReference type="Rhea" id="RHEA:15197"/>
        <dbReference type="Rhea" id="RHEA-COMP:12418"/>
        <dbReference type="Rhea" id="RHEA-COMP:12419"/>
        <dbReference type="ChEBI" id="CHEBI:15378"/>
        <dbReference type="ChEBI" id="CHEBI:57856"/>
        <dbReference type="ChEBI" id="CHEBI:59789"/>
        <dbReference type="ChEBI" id="CHEBI:90615"/>
        <dbReference type="ChEBI" id="CHEBI:90616"/>
        <dbReference type="EC" id="2.1.1.72"/>
    </reaction>
</comment>
<comment type="subunit">
    <text evidence="1">The type I restriction/modification system is composed of three polypeptides R, M and S; the restriction enzyme has stoichiometry R(2)M(2)S(1) while the methyltransferase is M(2)S(1).</text>
</comment>
<comment type="miscellaneous">
    <text evidence="1">Type I restriction and modification enzymes are complex, multifunctional systems which require ATP, S-adenosyl methionine and Mg(2+) as cofactors and, in addition to their endonucleolytic and methylase activities, are potent DNA-dependent ATPases.</text>
</comment>
<comment type="similarity">
    <text evidence="4">Belongs to the N(4)/N(6)-methyltransferase family.</text>
</comment>
<evidence type="ECO:0000250" key="1">
    <source>
        <dbReference type="UniProtKB" id="P08957"/>
    </source>
</evidence>
<evidence type="ECO:0000269" key="2">
    <source ref="3"/>
</evidence>
<evidence type="ECO:0000303" key="3">
    <source>
    </source>
</evidence>
<evidence type="ECO:0000305" key="4"/>
<evidence type="ECO:0007744" key="5">
    <source>
        <dbReference type="PDB" id="2OKC"/>
    </source>
</evidence>
<evidence type="ECO:0007829" key="6">
    <source>
        <dbReference type="PDB" id="2OKC"/>
    </source>
</evidence>
<accession>Q89Z59</accession>
<gene>
    <name evidence="4" type="primary">hsdM</name>
    <name type="ordered locus">BT_4518</name>
</gene>
<reference key="1">
    <citation type="journal article" date="2003" name="Science">
        <title>A genomic view of the human-Bacteroides thetaiotaomicron symbiosis.</title>
        <authorList>
            <person name="Xu J."/>
            <person name="Bjursell M.K."/>
            <person name="Himrod J."/>
            <person name="Deng S."/>
            <person name="Carmichael L.K."/>
            <person name="Chiang H.C."/>
            <person name="Hooper L.V."/>
            <person name="Gordon J.I."/>
        </authorList>
    </citation>
    <scope>NUCLEOTIDE SEQUENCE [LARGE SCALE GENOMIC DNA]</scope>
    <source>
        <strain>ATCC 29148 / DSM 2079 / JCM 5827 / CCUG 10774 / NCTC 10582 / VPI-5482 / E50</strain>
    </source>
</reference>
<reference key="2">
    <citation type="journal article" date="2003" name="Nucleic Acids Res.">
        <title>A nomenclature for restriction enzymes, DNA methyltransferases, homing endonucleases and their genes.</title>
        <authorList>
            <person name="Roberts R.J."/>
            <person name="Belfort M."/>
            <person name="Bestor T."/>
            <person name="Bhagwat A.S."/>
            <person name="Bickle T.A."/>
            <person name="Bitinaite J."/>
            <person name="Blumenthal R.M."/>
            <person name="Degtyarev S.K."/>
            <person name="Dryden D.T."/>
            <person name="Dybvig K."/>
            <person name="Firman K."/>
            <person name="Gromova E.S."/>
            <person name="Gumport R.I."/>
            <person name="Halford S.E."/>
            <person name="Hattman S."/>
            <person name="Heitman J."/>
            <person name="Hornby D.P."/>
            <person name="Janulaitis A."/>
            <person name="Jeltsch A."/>
            <person name="Josephsen J."/>
            <person name="Kiss A."/>
            <person name="Klaenhammer T.R."/>
            <person name="Kobayashi I."/>
            <person name="Kong H."/>
            <person name="Krueger D.H."/>
            <person name="Lacks S."/>
            <person name="Marinus M.G."/>
            <person name="Miyahara M."/>
            <person name="Morgan R.D."/>
            <person name="Murray N.E."/>
            <person name="Nagaraja V."/>
            <person name="Piekarowicz A."/>
            <person name="Pingoud A."/>
            <person name="Raleigh E."/>
            <person name="Rao D.N."/>
            <person name="Reich N."/>
            <person name="Repin V.E."/>
            <person name="Selker E.U."/>
            <person name="Shaw P.C."/>
            <person name="Stein D.C."/>
            <person name="Stoddard B.L."/>
            <person name="Szybalski W."/>
            <person name="Trautner T.A."/>
            <person name="Van Etten J.L."/>
            <person name="Vitor J.M."/>
            <person name="Wilson G.G."/>
            <person name="Xu S.Y."/>
        </authorList>
    </citation>
    <scope>NOMENCLATURE</scope>
    <scope>SUBTYPE</scope>
</reference>
<reference key="3">
    <citation type="submission" date="2007-01" db="PDB data bank">
        <title>Crystal structure of type I restriction enzyme protein (NP_813429.1) from bacteriodes thetaiotaomicron VPI-5482 at 2.20 A resolution resolution.</title>
        <authorList>
            <consortium name="Joint center for structural genomics (JCSG)"/>
        </authorList>
    </citation>
    <scope>X-RAY CRYSTALLOGRAPHY (2.20 ANGSTROMS) IN COMPLEX WITH S-ADENOSYL-L-METHIONINE</scope>
</reference>
<feature type="chain" id="PRO_0000310988" description="Type I restriction enzyme BthVORF4518P methylase subunit">
    <location>
        <begin position="1"/>
        <end position="472"/>
    </location>
</feature>
<feature type="binding site" evidence="2 5">
    <location>
        <begin position="151"/>
        <end position="156"/>
    </location>
    <ligand>
        <name>S-adenosyl-L-methionine</name>
        <dbReference type="ChEBI" id="CHEBI:59789"/>
    </ligand>
</feature>
<feature type="binding site" evidence="2 5">
    <location>
        <begin position="181"/>
        <end position="183"/>
    </location>
    <ligand>
        <name>S-adenosyl-L-methionine</name>
        <dbReference type="ChEBI" id="CHEBI:59789"/>
    </ligand>
</feature>
<feature type="binding site" evidence="2 5">
    <location>
        <position position="214"/>
    </location>
    <ligand>
        <name>S-adenosyl-L-methionine</name>
        <dbReference type="ChEBI" id="CHEBI:59789"/>
    </ligand>
</feature>
<feature type="binding site" evidence="2 5">
    <location>
        <begin position="243"/>
        <end position="244"/>
    </location>
    <ligand>
        <name>S-adenosyl-L-methionine</name>
        <dbReference type="ChEBI" id="CHEBI:59789"/>
    </ligand>
</feature>
<feature type="helix" evidence="6">
    <location>
        <begin position="11"/>
        <end position="24"/>
    </location>
</feature>
<feature type="helix" evidence="6">
    <location>
        <begin position="29"/>
        <end position="51"/>
    </location>
</feature>
<feature type="helix" evidence="6">
    <location>
        <begin position="64"/>
        <end position="68"/>
    </location>
</feature>
<feature type="helix" evidence="6">
    <location>
        <begin position="73"/>
        <end position="87"/>
    </location>
</feature>
<feature type="helix" evidence="6">
    <location>
        <begin position="91"/>
        <end position="96"/>
    </location>
</feature>
<feature type="turn" evidence="6">
    <location>
        <begin position="97"/>
        <end position="99"/>
    </location>
</feature>
<feature type="helix" evidence="6">
    <location>
        <begin position="107"/>
        <end position="118"/>
    </location>
</feature>
<feature type="helix" evidence="6">
    <location>
        <begin position="128"/>
        <end position="142"/>
    </location>
</feature>
<feature type="turn" evidence="6">
    <location>
        <begin position="145"/>
        <end position="147"/>
    </location>
</feature>
<feature type="helix" evidence="6">
    <location>
        <begin position="150"/>
        <end position="152"/>
    </location>
</feature>
<feature type="helix" evidence="6">
    <location>
        <begin position="156"/>
        <end position="166"/>
    </location>
</feature>
<feature type="strand" evidence="6">
    <location>
        <begin position="174"/>
        <end position="176"/>
    </location>
</feature>
<feature type="helix" evidence="6">
    <location>
        <begin position="183"/>
        <end position="193"/>
    </location>
</feature>
<feature type="helix" evidence="6">
    <location>
        <begin position="200"/>
        <end position="207"/>
    </location>
</feature>
<feature type="strand" evidence="6">
    <location>
        <begin position="210"/>
        <end position="215"/>
    </location>
</feature>
<feature type="helix" evidence="6">
    <location>
        <begin position="217"/>
        <end position="229"/>
    </location>
</feature>
<feature type="strand" evidence="6">
    <location>
        <begin position="238"/>
        <end position="241"/>
    </location>
</feature>
<feature type="turn" evidence="6">
    <location>
        <begin position="244"/>
        <end position="246"/>
    </location>
</feature>
<feature type="strand" evidence="6">
    <location>
        <begin position="253"/>
        <end position="258"/>
    </location>
</feature>
<feature type="strand" evidence="6">
    <location>
        <begin position="277"/>
        <end position="279"/>
    </location>
</feature>
<feature type="helix" evidence="6">
    <location>
        <begin position="284"/>
        <end position="295"/>
    </location>
</feature>
<feature type="strand" evidence="6">
    <location>
        <begin position="296"/>
        <end position="307"/>
    </location>
</feature>
<feature type="helix" evidence="6">
    <location>
        <begin position="308"/>
        <end position="312"/>
    </location>
</feature>
<feature type="helix" evidence="6">
    <location>
        <begin position="316"/>
        <end position="327"/>
    </location>
</feature>
<feature type="strand" evidence="6">
    <location>
        <begin position="328"/>
        <end position="335"/>
    </location>
</feature>
<feature type="strand" evidence="6">
    <location>
        <begin position="338"/>
        <end position="343"/>
    </location>
</feature>
<feature type="strand" evidence="6">
    <location>
        <begin position="348"/>
        <end position="357"/>
    </location>
</feature>
<feature type="strand" evidence="6">
    <location>
        <begin position="360"/>
        <end position="366"/>
    </location>
</feature>
<feature type="strand" evidence="6">
    <location>
        <begin position="375"/>
        <end position="378"/>
    </location>
</feature>
<feature type="helix" evidence="6">
    <location>
        <begin position="382"/>
        <end position="385"/>
    </location>
</feature>
<feature type="helix" evidence="6">
    <location>
        <begin position="386"/>
        <end position="393"/>
    </location>
</feature>
<feature type="turn" evidence="6">
    <location>
        <begin position="401"/>
        <end position="403"/>
    </location>
</feature>
<feature type="strand" evidence="6">
    <location>
        <begin position="408"/>
        <end position="413"/>
    </location>
</feature>
<feature type="helix" evidence="6">
    <location>
        <begin position="414"/>
        <end position="419"/>
    </location>
</feature>
<feature type="helix" evidence="6">
    <location>
        <begin position="421"/>
        <end position="423"/>
    </location>
</feature>
<organism>
    <name type="scientific">Bacteroides thetaiotaomicron (strain ATCC 29148 / DSM 2079 / JCM 5827 / CCUG 10774 / NCTC 10582 / VPI-5482 / E50)</name>
    <dbReference type="NCBI Taxonomy" id="226186"/>
    <lineage>
        <taxon>Bacteria</taxon>
        <taxon>Pseudomonadati</taxon>
        <taxon>Bacteroidota</taxon>
        <taxon>Bacteroidia</taxon>
        <taxon>Bacteroidales</taxon>
        <taxon>Bacteroidaceae</taxon>
        <taxon>Bacteroides</taxon>
    </lineage>
</organism>
<name>T1M_BACTN</name>
<proteinExistence type="evidence at protein level"/>
<sequence length="472" mass="53127">MATNSSTEQSLTKKVWNLATTLAGQGIGFTDYITQLTYLLFLKMDAENVEMFGEESAIPTGYQWADLIAFDGLDLVKQYEETLKLLSELDNLIGTIYTKAQNKIDKPVYLKKVITMIDEEQWLIMDGDVKGAIYESILEKNGQDKKSGAGQYFTPRPLIQAMVDCINPQMGETVCDPACGTGGFLLTAYDYMKGQSASKEKRDFLRDKALHGVDNTPLVVTLASMNLYLHGIGTDRSPIVCEDSLEKEPSTLVDVILANPPFGTRPAGSVDINRPDFYVETKNNQLNFLQHMMLMLKTGGRAAVVLPDNVLFEAGAGETIRKRLLQDFNLHTILRLPTGIFYAQGVKANVLFFSKGQPTKEIWFYDYRTDIKHTLATNKLERHHLDDFVSCYNNRVEIYDAENNPQGRWRKYPVDEIIARDKTSLDITWIKPGGEVDDRSLAELMADIKDKSQTISRAVTELEKLLANIEEN</sequence>
<protein>
    <recommendedName>
        <fullName>Type I restriction enzyme BthVORF4518P methylase subunit</fullName>
        <shortName>M protein</shortName>
        <ecNumber evidence="1">2.1.1.72</ecNumber>
    </recommendedName>
    <alternativeName>
        <fullName evidence="3">Type I methyltransferase M.BthVORF4518P</fullName>
        <shortName>M.BthVORF4518P</shortName>
    </alternativeName>
</protein>